<sequence length="530" mass="57464">MNNARPIRRALISVSDKTGIVEFAQALAERGVDILSTGGTARLLAEQGIAVTEVSDYTGFPEMMDGRVKTLHPKVHGGVLGRRGQDDEVMAKHGINPIDMVVVNLYPFAETVAKEGCTLADAVENIDIGGPTMVRSAAKNHKDVTIVVNASDYHRVITEMDANDTSLTLETRFDLAIAAFEHTAAYDGMIANYFGTMVPSYGENKEGDEESKFPRTFNQQFIKKQDMRYGENSHQAAAFYVEANPQEASVATARQIQGKALSYNNIADTDAALECVKEFNEPACVIVKHANPCGVALGKDILEAYNRAYQTDPTSAFGGIIAFNQELDAETATAIVERQFVEVIIAPSVSAEAMEVVAAKKNVRLLECGEWTTKTTGFDVKRVNGGLLVQDRDQGMVSLDDLKVVSKRQPTEEELKDALFCWKVAKYVKSNAIVYSKGDMTIGVGAGQMSRVYSAKIAGIKAADEGLQVEGCVMASDAFFPFRDGIDAAAEAGIKCVIQPGGSMRDDEVIAAADEHGMAMIFTGMRHFRH</sequence>
<accession>Q7MGT5</accession>
<reference key="1">
    <citation type="journal article" date="2003" name="Genome Res.">
        <title>Comparative genome analysis of Vibrio vulnificus, a marine pathogen.</title>
        <authorList>
            <person name="Chen C.-Y."/>
            <person name="Wu K.-M."/>
            <person name="Chang Y.-C."/>
            <person name="Chang C.-H."/>
            <person name="Tsai H.-C."/>
            <person name="Liao T.-L."/>
            <person name="Liu Y.-M."/>
            <person name="Chen H.-J."/>
            <person name="Shen A.B.-T."/>
            <person name="Li J.-C."/>
            <person name="Su T.-L."/>
            <person name="Shao C.-P."/>
            <person name="Lee C.-T."/>
            <person name="Hor L.-I."/>
            <person name="Tsai S.-F."/>
        </authorList>
    </citation>
    <scope>NUCLEOTIDE SEQUENCE [LARGE SCALE GENOMIC DNA]</scope>
    <source>
        <strain>YJ016</strain>
    </source>
</reference>
<protein>
    <recommendedName>
        <fullName evidence="1">Bifunctional purine biosynthesis protein PurH</fullName>
    </recommendedName>
    <domain>
        <recommendedName>
            <fullName evidence="1">Phosphoribosylaminoimidazolecarboxamide formyltransferase</fullName>
            <ecNumber evidence="1">2.1.2.3</ecNumber>
        </recommendedName>
        <alternativeName>
            <fullName evidence="1">AICAR transformylase</fullName>
        </alternativeName>
    </domain>
    <domain>
        <recommendedName>
            <fullName evidence="1">IMP cyclohydrolase</fullName>
            <ecNumber evidence="1">3.5.4.10</ecNumber>
        </recommendedName>
        <alternativeName>
            <fullName evidence="1">ATIC</fullName>
        </alternativeName>
        <alternativeName>
            <fullName evidence="1">IMP synthase</fullName>
        </alternativeName>
        <alternativeName>
            <fullName evidence="1">Inosinicase</fullName>
        </alternativeName>
    </domain>
</protein>
<comment type="catalytic activity">
    <reaction evidence="1">
        <text>(6R)-10-formyltetrahydrofolate + 5-amino-1-(5-phospho-beta-D-ribosyl)imidazole-4-carboxamide = 5-formamido-1-(5-phospho-D-ribosyl)imidazole-4-carboxamide + (6S)-5,6,7,8-tetrahydrofolate</text>
        <dbReference type="Rhea" id="RHEA:22192"/>
        <dbReference type="ChEBI" id="CHEBI:57453"/>
        <dbReference type="ChEBI" id="CHEBI:58467"/>
        <dbReference type="ChEBI" id="CHEBI:58475"/>
        <dbReference type="ChEBI" id="CHEBI:195366"/>
        <dbReference type="EC" id="2.1.2.3"/>
    </reaction>
</comment>
<comment type="catalytic activity">
    <reaction evidence="1">
        <text>IMP + H2O = 5-formamido-1-(5-phospho-D-ribosyl)imidazole-4-carboxamide</text>
        <dbReference type="Rhea" id="RHEA:18445"/>
        <dbReference type="ChEBI" id="CHEBI:15377"/>
        <dbReference type="ChEBI" id="CHEBI:58053"/>
        <dbReference type="ChEBI" id="CHEBI:58467"/>
        <dbReference type="EC" id="3.5.4.10"/>
    </reaction>
</comment>
<comment type="pathway">
    <text evidence="1">Purine metabolism; IMP biosynthesis via de novo pathway; 5-formamido-1-(5-phospho-D-ribosyl)imidazole-4-carboxamide from 5-amino-1-(5-phospho-D-ribosyl)imidazole-4-carboxamide (10-formyl THF route): step 1/1.</text>
</comment>
<comment type="pathway">
    <text evidence="1">Purine metabolism; IMP biosynthesis via de novo pathway; IMP from 5-formamido-1-(5-phospho-D-ribosyl)imidazole-4-carboxamide: step 1/1.</text>
</comment>
<comment type="domain">
    <text evidence="1">The IMP cyclohydrolase activity resides in the N-terminal region.</text>
</comment>
<comment type="similarity">
    <text evidence="1">Belongs to the PurH family.</text>
</comment>
<keyword id="KW-0378">Hydrolase</keyword>
<keyword id="KW-0511">Multifunctional enzyme</keyword>
<keyword id="KW-0658">Purine biosynthesis</keyword>
<keyword id="KW-0808">Transferase</keyword>
<proteinExistence type="inferred from homology"/>
<feature type="chain" id="PRO_0000192148" description="Bifunctional purine biosynthesis protein PurH">
    <location>
        <begin position="1"/>
        <end position="530"/>
    </location>
</feature>
<feature type="domain" description="MGS-like" evidence="2">
    <location>
        <begin position="1"/>
        <end position="148"/>
    </location>
</feature>
<dbReference type="EC" id="2.1.2.3" evidence="1"/>
<dbReference type="EC" id="3.5.4.10" evidence="1"/>
<dbReference type="EMBL" id="BA000037">
    <property type="protein sequence ID" value="BAC95906.1"/>
    <property type="molecule type" value="Genomic_DNA"/>
</dbReference>
<dbReference type="RefSeq" id="WP_011079215.1">
    <property type="nucleotide sequence ID" value="NC_005139.1"/>
</dbReference>
<dbReference type="SMR" id="Q7MGT5"/>
<dbReference type="STRING" id="672.VV93_v1c28600"/>
<dbReference type="KEGG" id="vvy:VV3142"/>
<dbReference type="PATRIC" id="fig|196600.6.peg.3114"/>
<dbReference type="eggNOG" id="COG0138">
    <property type="taxonomic scope" value="Bacteria"/>
</dbReference>
<dbReference type="HOGENOM" id="CLU_016316_5_2_6"/>
<dbReference type="UniPathway" id="UPA00074">
    <property type="reaction ID" value="UER00133"/>
</dbReference>
<dbReference type="UniPathway" id="UPA00074">
    <property type="reaction ID" value="UER00135"/>
</dbReference>
<dbReference type="Proteomes" id="UP000002675">
    <property type="component" value="Chromosome I"/>
</dbReference>
<dbReference type="GO" id="GO:0005829">
    <property type="term" value="C:cytosol"/>
    <property type="evidence" value="ECO:0007669"/>
    <property type="project" value="TreeGrafter"/>
</dbReference>
<dbReference type="GO" id="GO:0003937">
    <property type="term" value="F:IMP cyclohydrolase activity"/>
    <property type="evidence" value="ECO:0007669"/>
    <property type="project" value="UniProtKB-UniRule"/>
</dbReference>
<dbReference type="GO" id="GO:0004643">
    <property type="term" value="F:phosphoribosylaminoimidazolecarboxamide formyltransferase activity"/>
    <property type="evidence" value="ECO:0007669"/>
    <property type="project" value="UniProtKB-UniRule"/>
</dbReference>
<dbReference type="GO" id="GO:0006189">
    <property type="term" value="P:'de novo' IMP biosynthetic process"/>
    <property type="evidence" value="ECO:0007669"/>
    <property type="project" value="UniProtKB-UniRule"/>
</dbReference>
<dbReference type="CDD" id="cd01421">
    <property type="entry name" value="IMPCH"/>
    <property type="match status" value="1"/>
</dbReference>
<dbReference type="FunFam" id="3.40.140.20:FF:000001">
    <property type="entry name" value="Bifunctional purine biosynthesis protein PurH"/>
    <property type="match status" value="1"/>
</dbReference>
<dbReference type="FunFam" id="3.40.140.20:FF:000002">
    <property type="entry name" value="Bifunctional purine biosynthesis protein PurH"/>
    <property type="match status" value="1"/>
</dbReference>
<dbReference type="FunFam" id="3.40.50.1380:FF:000001">
    <property type="entry name" value="Bifunctional purine biosynthesis protein PurH"/>
    <property type="match status" value="1"/>
</dbReference>
<dbReference type="Gene3D" id="3.40.140.20">
    <property type="match status" value="2"/>
</dbReference>
<dbReference type="Gene3D" id="3.40.50.1380">
    <property type="entry name" value="Methylglyoxal synthase-like domain"/>
    <property type="match status" value="1"/>
</dbReference>
<dbReference type="HAMAP" id="MF_00139">
    <property type="entry name" value="PurH"/>
    <property type="match status" value="1"/>
</dbReference>
<dbReference type="InterPro" id="IPR024051">
    <property type="entry name" value="AICAR_Tfase_dup_dom_sf"/>
</dbReference>
<dbReference type="InterPro" id="IPR016193">
    <property type="entry name" value="Cytidine_deaminase-like"/>
</dbReference>
<dbReference type="InterPro" id="IPR011607">
    <property type="entry name" value="MGS-like_dom"/>
</dbReference>
<dbReference type="InterPro" id="IPR036914">
    <property type="entry name" value="MGS-like_dom_sf"/>
</dbReference>
<dbReference type="InterPro" id="IPR002695">
    <property type="entry name" value="PurH-like"/>
</dbReference>
<dbReference type="NCBIfam" id="NF002049">
    <property type="entry name" value="PRK00881.1"/>
    <property type="match status" value="1"/>
</dbReference>
<dbReference type="NCBIfam" id="TIGR00355">
    <property type="entry name" value="purH"/>
    <property type="match status" value="1"/>
</dbReference>
<dbReference type="PANTHER" id="PTHR11692:SF0">
    <property type="entry name" value="BIFUNCTIONAL PURINE BIOSYNTHESIS PROTEIN ATIC"/>
    <property type="match status" value="1"/>
</dbReference>
<dbReference type="PANTHER" id="PTHR11692">
    <property type="entry name" value="BIFUNCTIONAL PURINE BIOSYNTHESIS PROTEIN PURH"/>
    <property type="match status" value="1"/>
</dbReference>
<dbReference type="Pfam" id="PF01808">
    <property type="entry name" value="AICARFT_IMPCHas"/>
    <property type="match status" value="1"/>
</dbReference>
<dbReference type="Pfam" id="PF02142">
    <property type="entry name" value="MGS"/>
    <property type="match status" value="1"/>
</dbReference>
<dbReference type="PIRSF" id="PIRSF000414">
    <property type="entry name" value="AICARFT_IMPCHas"/>
    <property type="match status" value="1"/>
</dbReference>
<dbReference type="SMART" id="SM00798">
    <property type="entry name" value="AICARFT_IMPCHas"/>
    <property type="match status" value="1"/>
</dbReference>
<dbReference type="SMART" id="SM00851">
    <property type="entry name" value="MGS"/>
    <property type="match status" value="1"/>
</dbReference>
<dbReference type="SUPFAM" id="SSF53927">
    <property type="entry name" value="Cytidine deaminase-like"/>
    <property type="match status" value="1"/>
</dbReference>
<dbReference type="SUPFAM" id="SSF52335">
    <property type="entry name" value="Methylglyoxal synthase-like"/>
    <property type="match status" value="1"/>
</dbReference>
<dbReference type="PROSITE" id="PS51855">
    <property type="entry name" value="MGS"/>
    <property type="match status" value="1"/>
</dbReference>
<name>PUR9_VIBVY</name>
<organism>
    <name type="scientific">Vibrio vulnificus (strain YJ016)</name>
    <dbReference type="NCBI Taxonomy" id="196600"/>
    <lineage>
        <taxon>Bacteria</taxon>
        <taxon>Pseudomonadati</taxon>
        <taxon>Pseudomonadota</taxon>
        <taxon>Gammaproteobacteria</taxon>
        <taxon>Vibrionales</taxon>
        <taxon>Vibrionaceae</taxon>
        <taxon>Vibrio</taxon>
    </lineage>
</organism>
<evidence type="ECO:0000255" key="1">
    <source>
        <dbReference type="HAMAP-Rule" id="MF_00139"/>
    </source>
</evidence>
<evidence type="ECO:0000255" key="2">
    <source>
        <dbReference type="PROSITE-ProRule" id="PRU01202"/>
    </source>
</evidence>
<gene>
    <name evidence="1" type="primary">purH</name>
    <name type="ordered locus">VV3142</name>
</gene>